<gene>
    <name evidence="1" type="primary">TRM1</name>
    <name type="ORF">BALF3</name>
</gene>
<sequence length="685" mass="74764">MSGLLAAAYSQVYALAVELSVCTRLDPRSLDVAAVVRNAGLLAELEAILLPRLRRQNDRACSALSLELVHLLENSREASAALLAPGRKGTRVPPLRTPSVAYSVEFYGGHKVDVSLCLINDIEILMKRINSVFYCMSHTMGLESLERALDLLGRFRGVSPIPDPRLYITSVPCWRCVGELMVLPNHGNPSTAEGTHVSCNHLAVPVNPEPVSGLFENEVRQAGLGHLLEAEEKARPGGPEEGAVPGPGRPEAEGATRALDTYNVFSTVPPEVAELSELLYWNSGGHAIGATGQGEGGGHSRLSALFARERRLALVRGACEEALAGARLTHLFDAVAPGATERLFCGGVYSSSGDAVEALKADCAAAFTAHPQYRAILQKRNELYTRLNRAMQRLGRGEEEASRESPEVPRPAGAREPGPSGALSDALKRKEQYLRQVATEGLAKLQSCLAQQSETLTETLCLRVWGDVVYWELARMRNHFLYRRAFVSGPWEDRRAGEGAAFENSKYIKTHLFTQTLSSEHLHALTHSLYTFITGPLAEESGLFPPPSNVALARCCDAAGTLPHQKAFLTSLIWPGIEPSDWIETSFNSFYSVPGGSLASSQQILCRALREAVLTVSLYNKTWGRSLILRRADAVSPGQALPPDGLYLTYDSDRPLILLYKGRGWVFKDLYALLYLHLQMRDDSA</sequence>
<feature type="chain" id="PRO_0000115889" description="Tripartite terminase subunit 1">
    <location>
        <begin position="1"/>
        <end position="685"/>
    </location>
</feature>
<feature type="zinc finger region" description="C3H1-type" evidence="1">
    <location>
        <begin position="173"/>
        <end position="201"/>
    </location>
</feature>
<feature type="region of interest" description="Disordered" evidence="2">
    <location>
        <begin position="231"/>
        <end position="254"/>
    </location>
</feature>
<feature type="region of interest" description="Disordered" evidence="2">
    <location>
        <begin position="394"/>
        <end position="423"/>
    </location>
</feature>
<feature type="compositionally biased region" description="Basic and acidic residues" evidence="2">
    <location>
        <begin position="395"/>
        <end position="407"/>
    </location>
</feature>
<feature type="binding site" evidence="1">
    <location>
        <begin position="619"/>
        <end position="626"/>
    </location>
    <ligand>
        <name>ATP</name>
        <dbReference type="ChEBI" id="CHEBI:30616"/>
    </ligand>
</feature>
<name>TRM1_EBVB9</name>
<accession>P25939</accession>
<accession>Q777A8</accession>
<reference key="1">
    <citation type="journal article" date="1984" name="Nature">
        <title>DNA sequence and expression of the B95-8 Epstein-Barr virus genome.</title>
        <authorList>
            <person name="Baer R."/>
            <person name="Bankier A.T."/>
            <person name="Biggin M.D."/>
            <person name="Deininger P.L."/>
            <person name="Farrell P.J."/>
            <person name="Gibson T.J."/>
            <person name="Hatfull G."/>
            <person name="Hudson G.S."/>
            <person name="Satchwell S.C."/>
            <person name="Seguin C."/>
            <person name="Tuffnell P.S."/>
            <person name="Barrell B.G."/>
        </authorList>
    </citation>
    <scope>NUCLEOTIDE SEQUENCE [LARGE SCALE GENOMIC DNA]</scope>
</reference>
<reference key="2">
    <citation type="journal article" date="2003" name="Virology">
        <title>Updated Epstein-Barr virus (EBV) DNA sequence and analysis of a promoter for the BART (CST, BARF0) RNAs of EBV.</title>
        <authorList>
            <person name="de Jesus O."/>
            <person name="Smith P.R."/>
            <person name="Spender L.C."/>
            <person name="Elgueta Karstegl C."/>
            <person name="Niller H.H."/>
            <person name="Huang D."/>
            <person name="Farrell P.J."/>
        </authorList>
    </citation>
    <scope>GENOME REANNOTATION</scope>
</reference>
<reference key="3">
    <citation type="journal article" date="2014" name="J. Virol.">
        <title>Epstein-Barr virus BALF3 has nuclease activity and mediates mature virion production during the lytic cycle.</title>
        <authorList>
            <person name="Chiu S.H."/>
            <person name="Wu M.C."/>
            <person name="Wu C.C."/>
            <person name="Chen Y.C."/>
            <person name="Lin S.F."/>
            <person name="Hsu J.T."/>
            <person name="Yang C.S."/>
            <person name="Tsai C.H."/>
            <person name="Takada K."/>
            <person name="Chen M.R."/>
            <person name="Chen J.Y."/>
        </authorList>
    </citation>
    <scope>FUNCTION</scope>
    <scope>SUBCELLULAR LOCATION</scope>
</reference>
<comment type="function">
    <text evidence="1 3">Component of the molecular motor that translocates viral genomic DNA in empty capsid during DNA packaging. Forms a tripartite terminase complex together with TRM2 and TRM3 in the host cytoplasm. Once the complex reaches the host nucleus, it interacts with the capsid portal vertex. This portal forms a ring in which genomic DNA is translocated into the capsid. TRM1 carries an endonuclease activity that plays an important role for the cleavage of concatemeric viral DNA into unit length genomes.</text>
</comment>
<comment type="subunit">
    <text evidence="1">Associates with TRM2 and TRM3 to form the tripartite terminase complex. Interacts with portal protein.</text>
</comment>
<comment type="subcellular location">
    <subcellularLocation>
        <location evidence="1 3">Host nucleus</location>
    </subcellularLocation>
    <text evidence="1">Found associated with the external surface of the viral capsid during assembly and DNA packaging, but seems absent in extracellular mature virions.</text>
</comment>
<comment type="similarity">
    <text evidence="1">Belongs to the herpesviridae TRM1 protein family.</text>
</comment>
<proteinExistence type="inferred from homology"/>
<protein>
    <recommendedName>
        <fullName evidence="1">Tripartite terminase subunit 1</fullName>
    </recommendedName>
</protein>
<organism>
    <name type="scientific">Epstein-Barr virus (strain B95-8)</name>
    <name type="common">HHV-4</name>
    <name type="synonym">Human herpesvirus 4</name>
    <dbReference type="NCBI Taxonomy" id="10377"/>
    <lineage>
        <taxon>Viruses</taxon>
        <taxon>Duplodnaviria</taxon>
        <taxon>Heunggongvirae</taxon>
        <taxon>Peploviricota</taxon>
        <taxon>Herviviricetes</taxon>
        <taxon>Herpesvirales</taxon>
        <taxon>Orthoherpesviridae</taxon>
        <taxon>Gammaherpesvirinae</taxon>
        <taxon>Lymphocryptovirus</taxon>
        <taxon>Lymphocryptovirus humangamma4</taxon>
        <taxon>Epstein-Barr virus (strain GD1)</taxon>
    </lineage>
</organism>
<evidence type="ECO:0000255" key="1">
    <source>
        <dbReference type="HAMAP-Rule" id="MF_04014"/>
    </source>
</evidence>
<evidence type="ECO:0000256" key="2">
    <source>
        <dbReference type="SAM" id="MobiDB-lite"/>
    </source>
</evidence>
<evidence type="ECO:0000269" key="3">
    <source>
    </source>
</evidence>
<dbReference type="EMBL" id="V01555">
    <property type="protein sequence ID" value="CAA24807.1"/>
    <property type="molecule type" value="Genomic_DNA"/>
</dbReference>
<dbReference type="EMBL" id="AJ507799">
    <property type="protein sequence ID" value="CAD53465.1"/>
    <property type="molecule type" value="Genomic_DNA"/>
</dbReference>
<dbReference type="PIR" id="S33056">
    <property type="entry name" value="S33056"/>
</dbReference>
<dbReference type="RefSeq" id="YP_401715.2">
    <property type="nucleotide sequence ID" value="NC_007605.1"/>
</dbReference>
<dbReference type="SMR" id="P25939"/>
<dbReference type="IntAct" id="P25939">
    <property type="interactions" value="16"/>
</dbReference>
<dbReference type="MINT" id="P25939"/>
<dbReference type="DNASU" id="3783679"/>
<dbReference type="GeneID" id="3783679"/>
<dbReference type="KEGG" id="vg:3783679"/>
<dbReference type="Proteomes" id="UP000153037">
    <property type="component" value="Segment"/>
</dbReference>
<dbReference type="GO" id="GO:0042025">
    <property type="term" value="C:host cell nucleus"/>
    <property type="evidence" value="ECO:0007669"/>
    <property type="project" value="UniProtKB-SubCell"/>
</dbReference>
<dbReference type="GO" id="GO:0005524">
    <property type="term" value="F:ATP binding"/>
    <property type="evidence" value="ECO:0007669"/>
    <property type="project" value="UniProtKB-KW"/>
</dbReference>
<dbReference type="GO" id="GO:0008270">
    <property type="term" value="F:zinc ion binding"/>
    <property type="evidence" value="ECO:0007669"/>
    <property type="project" value="UniProtKB-KW"/>
</dbReference>
<dbReference type="GO" id="GO:0019073">
    <property type="term" value="P:viral DNA genome packaging"/>
    <property type="evidence" value="ECO:0007669"/>
    <property type="project" value="InterPro"/>
</dbReference>
<dbReference type="HAMAP" id="MF_04014">
    <property type="entry name" value="HSV_TRM1"/>
    <property type="match status" value="1"/>
</dbReference>
<dbReference type="InterPro" id="IPR000501">
    <property type="entry name" value="UL28/UL56"/>
</dbReference>
<dbReference type="Pfam" id="PF01366">
    <property type="entry name" value="PRTP"/>
    <property type="match status" value="1"/>
</dbReference>
<organismHost>
    <name type="scientific">Homo sapiens</name>
    <name type="common">Human</name>
    <dbReference type="NCBI Taxonomy" id="9606"/>
</organismHost>
<keyword id="KW-0067">ATP-binding</keyword>
<keyword id="KW-1048">Host nucleus</keyword>
<keyword id="KW-0426">Late protein</keyword>
<keyword id="KW-0479">Metal-binding</keyword>
<keyword id="KW-0547">Nucleotide-binding</keyword>
<keyword id="KW-1185">Reference proteome</keyword>
<keyword id="KW-0231">Viral genome packaging</keyword>
<keyword id="KW-1188">Viral release from host cell</keyword>
<keyword id="KW-0862">Zinc</keyword>
<keyword id="KW-0863">Zinc-finger</keyword>